<proteinExistence type="inferred from homology"/>
<name>PDXH_BURM9</name>
<organism>
    <name type="scientific">Burkholderia mallei (strain NCTC 10229)</name>
    <dbReference type="NCBI Taxonomy" id="412022"/>
    <lineage>
        <taxon>Bacteria</taxon>
        <taxon>Pseudomonadati</taxon>
        <taxon>Pseudomonadota</taxon>
        <taxon>Betaproteobacteria</taxon>
        <taxon>Burkholderiales</taxon>
        <taxon>Burkholderiaceae</taxon>
        <taxon>Burkholderia</taxon>
        <taxon>pseudomallei group</taxon>
    </lineage>
</organism>
<sequence>MTTLADLRTNYSRASLDAADVNPNPFVQFDVWFKEALDAQLPEPNTMTLATVDESGRPSARIVLIKGADERGFVFFTNYESRKGRELAHNPNAALLFYWIELERQVRVEGRIEKTSEEESDRYFASRPLGSRIGAWASEQSAVIESRALLEAREKEIGARFGENPPRPPHWGGYRLVPSSIEFWQGRPSRLHDRLLYTRDAASASGWKITRLAP</sequence>
<gene>
    <name evidence="1" type="primary">pdxH</name>
    <name type="ordered locus">BMA10229_A2494</name>
</gene>
<reference key="1">
    <citation type="journal article" date="2010" name="Genome Biol. Evol.">
        <title>Continuing evolution of Burkholderia mallei through genome reduction and large-scale rearrangements.</title>
        <authorList>
            <person name="Losada L."/>
            <person name="Ronning C.M."/>
            <person name="DeShazer D."/>
            <person name="Woods D."/>
            <person name="Fedorova N."/>
            <person name="Kim H.S."/>
            <person name="Shabalina S.A."/>
            <person name="Pearson T.R."/>
            <person name="Brinkac L."/>
            <person name="Tan P."/>
            <person name="Nandi T."/>
            <person name="Crabtree J."/>
            <person name="Badger J."/>
            <person name="Beckstrom-Sternberg S."/>
            <person name="Saqib M."/>
            <person name="Schutzer S.E."/>
            <person name="Keim P."/>
            <person name="Nierman W.C."/>
        </authorList>
    </citation>
    <scope>NUCLEOTIDE SEQUENCE [LARGE SCALE GENOMIC DNA]</scope>
    <source>
        <strain>NCTC 10229</strain>
    </source>
</reference>
<keyword id="KW-0285">Flavoprotein</keyword>
<keyword id="KW-0288">FMN</keyword>
<keyword id="KW-0560">Oxidoreductase</keyword>
<keyword id="KW-0664">Pyridoxine biosynthesis</keyword>
<comment type="function">
    <text evidence="1">Catalyzes the oxidation of either pyridoxine 5'-phosphate (PNP) or pyridoxamine 5'-phosphate (PMP) into pyridoxal 5'-phosphate (PLP).</text>
</comment>
<comment type="catalytic activity">
    <reaction evidence="1">
        <text>pyridoxamine 5'-phosphate + O2 + H2O = pyridoxal 5'-phosphate + H2O2 + NH4(+)</text>
        <dbReference type="Rhea" id="RHEA:15817"/>
        <dbReference type="ChEBI" id="CHEBI:15377"/>
        <dbReference type="ChEBI" id="CHEBI:15379"/>
        <dbReference type="ChEBI" id="CHEBI:16240"/>
        <dbReference type="ChEBI" id="CHEBI:28938"/>
        <dbReference type="ChEBI" id="CHEBI:58451"/>
        <dbReference type="ChEBI" id="CHEBI:597326"/>
        <dbReference type="EC" id="1.4.3.5"/>
    </reaction>
</comment>
<comment type="catalytic activity">
    <reaction evidence="1">
        <text>pyridoxine 5'-phosphate + O2 = pyridoxal 5'-phosphate + H2O2</text>
        <dbReference type="Rhea" id="RHEA:15149"/>
        <dbReference type="ChEBI" id="CHEBI:15379"/>
        <dbReference type="ChEBI" id="CHEBI:16240"/>
        <dbReference type="ChEBI" id="CHEBI:58589"/>
        <dbReference type="ChEBI" id="CHEBI:597326"/>
        <dbReference type="EC" id="1.4.3.5"/>
    </reaction>
</comment>
<comment type="cofactor">
    <cofactor evidence="1">
        <name>FMN</name>
        <dbReference type="ChEBI" id="CHEBI:58210"/>
    </cofactor>
    <text evidence="1">Binds 1 FMN per subunit.</text>
</comment>
<comment type="pathway">
    <text evidence="1">Cofactor metabolism; pyridoxal 5'-phosphate salvage; pyridoxal 5'-phosphate from pyridoxamine 5'-phosphate: step 1/1.</text>
</comment>
<comment type="pathway">
    <text evidence="1">Cofactor metabolism; pyridoxal 5'-phosphate salvage; pyridoxal 5'-phosphate from pyridoxine 5'-phosphate: step 1/1.</text>
</comment>
<comment type="subunit">
    <text evidence="1">Homodimer.</text>
</comment>
<comment type="similarity">
    <text evidence="1">Belongs to the pyridoxamine 5'-phosphate oxidase family.</text>
</comment>
<dbReference type="EC" id="1.4.3.5" evidence="1"/>
<dbReference type="EMBL" id="CP000546">
    <property type="protein sequence ID" value="ABN01742.1"/>
    <property type="molecule type" value="Genomic_DNA"/>
</dbReference>
<dbReference type="RefSeq" id="WP_004188935.1">
    <property type="nucleotide sequence ID" value="NC_008836.1"/>
</dbReference>
<dbReference type="SMR" id="A2S933"/>
<dbReference type="GeneID" id="92978130"/>
<dbReference type="KEGG" id="bml:BMA10229_A2494"/>
<dbReference type="HOGENOM" id="CLU_032263_2_2_4"/>
<dbReference type="UniPathway" id="UPA01068">
    <property type="reaction ID" value="UER00304"/>
</dbReference>
<dbReference type="UniPathway" id="UPA01068">
    <property type="reaction ID" value="UER00305"/>
</dbReference>
<dbReference type="Proteomes" id="UP000002283">
    <property type="component" value="Chromosome I"/>
</dbReference>
<dbReference type="GO" id="GO:0010181">
    <property type="term" value="F:FMN binding"/>
    <property type="evidence" value="ECO:0007669"/>
    <property type="project" value="UniProtKB-UniRule"/>
</dbReference>
<dbReference type="GO" id="GO:0004733">
    <property type="term" value="F:pyridoxamine phosphate oxidase activity"/>
    <property type="evidence" value="ECO:0007669"/>
    <property type="project" value="UniProtKB-UniRule"/>
</dbReference>
<dbReference type="GO" id="GO:0008615">
    <property type="term" value="P:pyridoxine biosynthetic process"/>
    <property type="evidence" value="ECO:0007669"/>
    <property type="project" value="UniProtKB-KW"/>
</dbReference>
<dbReference type="FunFam" id="2.30.110.10:FF:000005">
    <property type="entry name" value="NAD(P)H-hydrate epimerase"/>
    <property type="match status" value="1"/>
</dbReference>
<dbReference type="Gene3D" id="2.30.110.10">
    <property type="entry name" value="Electron Transport, Fmn-binding Protein, Chain A"/>
    <property type="match status" value="1"/>
</dbReference>
<dbReference type="HAMAP" id="MF_01629">
    <property type="entry name" value="PdxH"/>
    <property type="match status" value="1"/>
</dbReference>
<dbReference type="InterPro" id="IPR000659">
    <property type="entry name" value="Pyridox_Oxase"/>
</dbReference>
<dbReference type="InterPro" id="IPR019740">
    <property type="entry name" value="Pyridox_Oxase_CS"/>
</dbReference>
<dbReference type="InterPro" id="IPR011576">
    <property type="entry name" value="Pyridox_Oxase_N"/>
</dbReference>
<dbReference type="InterPro" id="IPR019576">
    <property type="entry name" value="Pyridoxamine_oxidase_dimer_C"/>
</dbReference>
<dbReference type="InterPro" id="IPR012349">
    <property type="entry name" value="Split_barrel_FMN-bd"/>
</dbReference>
<dbReference type="NCBIfam" id="TIGR00558">
    <property type="entry name" value="pdxH"/>
    <property type="match status" value="1"/>
</dbReference>
<dbReference type="NCBIfam" id="NF004231">
    <property type="entry name" value="PRK05679.1"/>
    <property type="match status" value="1"/>
</dbReference>
<dbReference type="PANTHER" id="PTHR10851:SF0">
    <property type="entry name" value="PYRIDOXINE-5'-PHOSPHATE OXIDASE"/>
    <property type="match status" value="1"/>
</dbReference>
<dbReference type="PANTHER" id="PTHR10851">
    <property type="entry name" value="PYRIDOXINE-5-PHOSPHATE OXIDASE"/>
    <property type="match status" value="1"/>
</dbReference>
<dbReference type="Pfam" id="PF10590">
    <property type="entry name" value="PNP_phzG_C"/>
    <property type="match status" value="1"/>
</dbReference>
<dbReference type="Pfam" id="PF01243">
    <property type="entry name" value="PNPOx_N"/>
    <property type="match status" value="1"/>
</dbReference>
<dbReference type="PIRSF" id="PIRSF000190">
    <property type="entry name" value="Pyd_amn-ph_oxd"/>
    <property type="match status" value="1"/>
</dbReference>
<dbReference type="SUPFAM" id="SSF50475">
    <property type="entry name" value="FMN-binding split barrel"/>
    <property type="match status" value="1"/>
</dbReference>
<dbReference type="PROSITE" id="PS01064">
    <property type="entry name" value="PYRIDOX_OXIDASE"/>
    <property type="match status" value="1"/>
</dbReference>
<protein>
    <recommendedName>
        <fullName evidence="1">Pyridoxine/pyridoxamine 5'-phosphate oxidase</fullName>
        <ecNumber evidence="1">1.4.3.5</ecNumber>
    </recommendedName>
    <alternativeName>
        <fullName evidence="1">PNP/PMP oxidase</fullName>
        <shortName evidence="1">PNPOx</shortName>
    </alternativeName>
    <alternativeName>
        <fullName evidence="1">Pyridoxal 5'-phosphate synthase</fullName>
    </alternativeName>
</protein>
<evidence type="ECO:0000255" key="1">
    <source>
        <dbReference type="HAMAP-Rule" id="MF_01629"/>
    </source>
</evidence>
<accession>A2S933</accession>
<feature type="chain" id="PRO_1000069685" description="Pyridoxine/pyridoxamine 5'-phosphate oxidase">
    <location>
        <begin position="1"/>
        <end position="214"/>
    </location>
</feature>
<feature type="binding site" evidence="1">
    <location>
        <begin position="8"/>
        <end position="11"/>
    </location>
    <ligand>
        <name>substrate</name>
    </ligand>
</feature>
<feature type="binding site" evidence="1">
    <location>
        <begin position="61"/>
        <end position="66"/>
    </location>
    <ligand>
        <name>FMN</name>
        <dbReference type="ChEBI" id="CHEBI:58210"/>
    </ligand>
</feature>
<feature type="binding site" evidence="1">
    <location>
        <position position="66"/>
    </location>
    <ligand>
        <name>substrate</name>
    </ligand>
</feature>
<feature type="binding site" evidence="1">
    <location>
        <begin position="76"/>
        <end position="77"/>
    </location>
    <ligand>
        <name>FMN</name>
        <dbReference type="ChEBI" id="CHEBI:58210"/>
    </ligand>
</feature>
<feature type="binding site" evidence="1">
    <location>
        <position position="82"/>
    </location>
    <ligand>
        <name>FMN</name>
        <dbReference type="ChEBI" id="CHEBI:58210"/>
    </ligand>
</feature>
<feature type="binding site" evidence="1">
    <location>
        <position position="83"/>
    </location>
    <ligand>
        <name>FMN</name>
        <dbReference type="ChEBI" id="CHEBI:58210"/>
    </ligand>
</feature>
<feature type="binding site" evidence="1">
    <location>
        <position position="105"/>
    </location>
    <ligand>
        <name>FMN</name>
        <dbReference type="ChEBI" id="CHEBI:58210"/>
    </ligand>
</feature>
<feature type="binding site" evidence="1">
    <location>
        <position position="123"/>
    </location>
    <ligand>
        <name>substrate</name>
    </ligand>
</feature>
<feature type="binding site" evidence="1">
    <location>
        <position position="127"/>
    </location>
    <ligand>
        <name>substrate</name>
    </ligand>
</feature>
<feature type="binding site" evidence="1">
    <location>
        <position position="131"/>
    </location>
    <ligand>
        <name>substrate</name>
    </ligand>
</feature>
<feature type="binding site" evidence="1">
    <location>
        <begin position="140"/>
        <end position="141"/>
    </location>
    <ligand>
        <name>FMN</name>
        <dbReference type="ChEBI" id="CHEBI:58210"/>
    </ligand>
</feature>
<feature type="binding site" evidence="1">
    <location>
        <position position="184"/>
    </location>
    <ligand>
        <name>FMN</name>
        <dbReference type="ChEBI" id="CHEBI:58210"/>
    </ligand>
</feature>
<feature type="binding site" evidence="1">
    <location>
        <begin position="190"/>
        <end position="192"/>
    </location>
    <ligand>
        <name>substrate</name>
    </ligand>
</feature>
<feature type="binding site" evidence="1">
    <location>
        <position position="194"/>
    </location>
    <ligand>
        <name>FMN</name>
        <dbReference type="ChEBI" id="CHEBI:58210"/>
    </ligand>
</feature>